<dbReference type="EC" id="3.2.1.39" evidence="1"/>
<dbReference type="EMBL" id="CU329671">
    <property type="protein sequence ID" value="CAB66439.1"/>
    <property type="molecule type" value="Genomic_DNA"/>
</dbReference>
<dbReference type="EMBL" id="D89208">
    <property type="protein sequence ID" value="BAA13869.1"/>
    <property type="molecule type" value="mRNA"/>
</dbReference>
<dbReference type="PIR" id="T43012">
    <property type="entry name" value="T43012"/>
</dbReference>
<dbReference type="PIR" id="T50398">
    <property type="entry name" value="T50398"/>
</dbReference>
<dbReference type="RefSeq" id="NP_595823.1">
    <property type="nucleotide sequence ID" value="NM_001021727.2"/>
</dbReference>
<dbReference type="BioGRID" id="277841">
    <property type="interactions" value="2"/>
</dbReference>
<dbReference type="FunCoup" id="Q9P7X4">
    <property type="interactions" value="24"/>
</dbReference>
<dbReference type="STRING" id="284812.Q9P7X4"/>
<dbReference type="PaxDb" id="4896-SPBP23A10.11c.1"/>
<dbReference type="EnsemblFungi" id="SPBP23A10.11c.1">
    <property type="protein sequence ID" value="SPBP23A10.11c.1:pep"/>
    <property type="gene ID" value="SPBP23A10.11c"/>
</dbReference>
<dbReference type="KEGG" id="spo:2541329"/>
<dbReference type="PomBase" id="SPBP23A10.11c"/>
<dbReference type="VEuPathDB" id="FungiDB:SPBP23A10.11c"/>
<dbReference type="eggNOG" id="ENOG502QSI7">
    <property type="taxonomic scope" value="Eukaryota"/>
</dbReference>
<dbReference type="HOGENOM" id="CLU_030276_0_0_1"/>
<dbReference type="InParanoid" id="Q9P7X4"/>
<dbReference type="OMA" id="NQDMPAI"/>
<dbReference type="PhylomeDB" id="Q9P7X4"/>
<dbReference type="PRO" id="PR:Q9P7X4"/>
<dbReference type="Proteomes" id="UP000002485">
    <property type="component" value="Chromosome II"/>
</dbReference>
<dbReference type="GO" id="GO:0005783">
    <property type="term" value="C:endoplasmic reticulum"/>
    <property type="evidence" value="ECO:0007005"/>
    <property type="project" value="PomBase"/>
</dbReference>
<dbReference type="GO" id="GO:0005576">
    <property type="term" value="C:extracellular region"/>
    <property type="evidence" value="ECO:0007669"/>
    <property type="project" value="UniProtKB-SubCell"/>
</dbReference>
<dbReference type="GO" id="GO:0009277">
    <property type="term" value="C:fungal-type cell wall"/>
    <property type="evidence" value="ECO:0000318"/>
    <property type="project" value="GO_Central"/>
</dbReference>
<dbReference type="GO" id="GO:0003843">
    <property type="term" value="F:1,3-beta-D-glucan synthase activity"/>
    <property type="evidence" value="ECO:0000266"/>
    <property type="project" value="PomBase"/>
</dbReference>
<dbReference type="GO" id="GO:0016798">
    <property type="term" value="F:hydrolase activity, acting on glycosyl bonds"/>
    <property type="evidence" value="ECO:0007669"/>
    <property type="project" value="UniProtKB-KW"/>
</dbReference>
<dbReference type="GO" id="GO:0071555">
    <property type="term" value="P:cell wall organization"/>
    <property type="evidence" value="ECO:0007669"/>
    <property type="project" value="UniProtKB-KW"/>
</dbReference>
<dbReference type="GO" id="GO:0071970">
    <property type="term" value="P:fungal-type cell wall (1-&gt;3)-beta-D-glucan biosynthetic process"/>
    <property type="evidence" value="ECO:0000266"/>
    <property type="project" value="PomBase"/>
</dbReference>
<dbReference type="InterPro" id="IPR018805">
    <property type="entry name" value="YJL171C/Tos1_C"/>
</dbReference>
<dbReference type="InterPro" id="IPR018807">
    <property type="entry name" value="YJL171C/Tos1_N"/>
</dbReference>
<dbReference type="PANTHER" id="PTHR31737">
    <property type="entry name" value="PROTEIN TOS1"/>
    <property type="match status" value="1"/>
</dbReference>
<dbReference type="PANTHER" id="PTHR31737:SF2">
    <property type="entry name" value="PROTEIN TOS1"/>
    <property type="match status" value="1"/>
</dbReference>
<dbReference type="Pfam" id="PF10287">
    <property type="entry name" value="YJL171C_Tos1_C"/>
    <property type="match status" value="1"/>
</dbReference>
<dbReference type="Pfam" id="PF10290">
    <property type="entry name" value="YJL171C_Tos1_N"/>
    <property type="match status" value="1"/>
</dbReference>
<sequence length="507" mass="53110">MIAKSFIASFLFLCFAFSGVKADGCSEENGYYYCNQASEVEFTNVGYSSTYNEITNMDTSSCSCSSTPKSYGGNLAPFDEEFSFHFRGPIELKRFAVYYPDTSNALSSLRKRSNNQHMKRHPHHKRDDVIDSTLTVYETVMYTTAVYGDSATTPAASEAQASSDILSSLASLSSASTDNLAASVTPTTVAASVASSVDTDSASATISSVVDSATSSVSTVIPSSIISAAPPDSASESTPASTSYASSTTSATSTSTTSGSSGSSDWGRSSFYEADSGTSDNIVFLNNMGGSAGSGVWSSCFGNSLSFAASNGVDGASSSQVLENILVASDKEFSIWTATECNNDCGYYLPGIPAYHGFSGAKLVLMEFIMPHDSSSSYNQDMPAIWSLNAQIPRTLQYGNADCSCWTTGCGEFDIFEVLSTGNEKMIPTLHGSQGSSNGNGGGAGSSDYFARPTSSSMIGAVIYDTSSSGIYIIDVTDQNVSFDSTYSASDVDAWLQSGATIVQLSS</sequence>
<comment type="function">
    <text evidence="1">Probable circularly permuted 1,3-beta-glucanase involved in cell wall modification through beta-1,3-glucan network alterations such as increased branching or remodeling.</text>
</comment>
<comment type="catalytic activity">
    <reaction evidence="1">
        <text>Hydrolysis of (1-&gt;3)-beta-D-glucosidic linkages in (1-&gt;3)-beta-D-glucans.</text>
        <dbReference type="EC" id="3.2.1.39"/>
    </reaction>
</comment>
<comment type="subcellular location">
    <subcellularLocation>
        <location evidence="4">Secreted</location>
    </subcellularLocation>
</comment>
<comment type="domain">
    <text evidence="1">The conserved ExDxxE motif might be important for catalytic activity.</text>
</comment>
<comment type="similarity">
    <text evidence="4">Belongs to the PGA52 family.</text>
</comment>
<evidence type="ECO:0000250" key="1">
    <source>
        <dbReference type="UniProtKB" id="P38288"/>
    </source>
</evidence>
<evidence type="ECO:0000255" key="2"/>
<evidence type="ECO:0000256" key="3">
    <source>
        <dbReference type="SAM" id="MobiDB-lite"/>
    </source>
</evidence>
<evidence type="ECO:0000305" key="4"/>
<feature type="signal peptide" evidence="2">
    <location>
        <begin position="1"/>
        <end position="22"/>
    </location>
</feature>
<feature type="chain" id="PRO_0000014203" description="Probable circularly permuted 1,3-beta-glucanase P23A10.11c YJL171C">
    <location>
        <begin position="23"/>
        <end position="507"/>
    </location>
</feature>
<feature type="region of interest" description="Disordered" evidence="3">
    <location>
        <begin position="228"/>
        <end position="266"/>
    </location>
</feature>
<feature type="short sequence motif" description="ExDxxE motif" evidence="1">
    <location>
        <begin position="412"/>
        <end position="417"/>
    </location>
</feature>
<feature type="compositionally biased region" description="Low complexity" evidence="3">
    <location>
        <begin position="228"/>
        <end position="264"/>
    </location>
</feature>
<feature type="glycosylation site" description="N-linked (GlcNAc...) asparagine" evidence="2">
    <location>
        <position position="480"/>
    </location>
</feature>
<feature type="sequence conflict" description="In Ref. 2; BAA13869." evidence="4" ref="2">
    <original>D</original>
    <variation>A</variation>
    <location>
        <position position="344"/>
    </location>
</feature>
<feature type="sequence conflict" description="In Ref. 2; BAA13869." evidence="4" ref="2">
    <original>F</original>
    <variation>S</variation>
    <location>
        <position position="358"/>
    </location>
</feature>
<feature type="sequence conflict" description="In Ref. 2; BAA13869." evidence="4" ref="2">
    <original>A</original>
    <variation>P</variation>
    <location>
        <position position="361"/>
    </location>
</feature>
<feature type="sequence conflict" description="In Ref. 2; BAA13869." evidence="4" ref="2">
    <original>F</original>
    <variation>S</variation>
    <location>
        <position position="368"/>
    </location>
</feature>
<feature type="sequence conflict" description="In Ref. 2; BAA13869." evidence="4" ref="2">
    <original>I</original>
    <variation>N</variation>
    <location>
        <position position="385"/>
    </location>
</feature>
<proteinExistence type="evidence at transcript level"/>
<name>YH6B_SCHPO</name>
<gene>
    <name type="ORF">SPBP23A10.11c</name>
</gene>
<organism>
    <name type="scientific">Schizosaccharomyces pombe (strain 972 / ATCC 24843)</name>
    <name type="common">Fission yeast</name>
    <dbReference type="NCBI Taxonomy" id="284812"/>
    <lineage>
        <taxon>Eukaryota</taxon>
        <taxon>Fungi</taxon>
        <taxon>Dikarya</taxon>
        <taxon>Ascomycota</taxon>
        <taxon>Taphrinomycotina</taxon>
        <taxon>Schizosaccharomycetes</taxon>
        <taxon>Schizosaccharomycetales</taxon>
        <taxon>Schizosaccharomycetaceae</taxon>
        <taxon>Schizosaccharomyces</taxon>
    </lineage>
</organism>
<keyword id="KW-0961">Cell wall biogenesis/degradation</keyword>
<keyword id="KW-0325">Glycoprotein</keyword>
<keyword id="KW-0326">Glycosidase</keyword>
<keyword id="KW-0378">Hydrolase</keyword>
<keyword id="KW-1185">Reference proteome</keyword>
<keyword id="KW-0964">Secreted</keyword>
<keyword id="KW-0732">Signal</keyword>
<accession>Q9P7X4</accession>
<accession>P78858</accession>
<protein>
    <recommendedName>
        <fullName evidence="1">Probable circularly permuted 1,3-beta-glucanase P23A10.11c YJL171C</fullName>
        <ecNumber evidence="1">3.2.1.39</ecNumber>
    </recommendedName>
</protein>
<reference key="1">
    <citation type="journal article" date="2002" name="Nature">
        <title>The genome sequence of Schizosaccharomyces pombe.</title>
        <authorList>
            <person name="Wood V."/>
            <person name="Gwilliam R."/>
            <person name="Rajandream M.A."/>
            <person name="Lyne M.H."/>
            <person name="Lyne R."/>
            <person name="Stewart A."/>
            <person name="Sgouros J.G."/>
            <person name="Peat N."/>
            <person name="Hayles J."/>
            <person name="Baker S.G."/>
            <person name="Basham D."/>
            <person name="Bowman S."/>
            <person name="Brooks K."/>
            <person name="Brown D."/>
            <person name="Brown S."/>
            <person name="Chillingworth T."/>
            <person name="Churcher C.M."/>
            <person name="Collins M."/>
            <person name="Connor R."/>
            <person name="Cronin A."/>
            <person name="Davis P."/>
            <person name="Feltwell T."/>
            <person name="Fraser A."/>
            <person name="Gentles S."/>
            <person name="Goble A."/>
            <person name="Hamlin N."/>
            <person name="Harris D.E."/>
            <person name="Hidalgo J."/>
            <person name="Hodgson G."/>
            <person name="Holroyd S."/>
            <person name="Hornsby T."/>
            <person name="Howarth S."/>
            <person name="Huckle E.J."/>
            <person name="Hunt S."/>
            <person name="Jagels K."/>
            <person name="James K.D."/>
            <person name="Jones L."/>
            <person name="Jones M."/>
            <person name="Leather S."/>
            <person name="McDonald S."/>
            <person name="McLean J."/>
            <person name="Mooney P."/>
            <person name="Moule S."/>
            <person name="Mungall K.L."/>
            <person name="Murphy L.D."/>
            <person name="Niblett D."/>
            <person name="Odell C."/>
            <person name="Oliver K."/>
            <person name="O'Neil S."/>
            <person name="Pearson D."/>
            <person name="Quail M.A."/>
            <person name="Rabbinowitsch E."/>
            <person name="Rutherford K.M."/>
            <person name="Rutter S."/>
            <person name="Saunders D."/>
            <person name="Seeger K."/>
            <person name="Sharp S."/>
            <person name="Skelton J."/>
            <person name="Simmonds M.N."/>
            <person name="Squares R."/>
            <person name="Squares S."/>
            <person name="Stevens K."/>
            <person name="Taylor K."/>
            <person name="Taylor R.G."/>
            <person name="Tivey A."/>
            <person name="Walsh S.V."/>
            <person name="Warren T."/>
            <person name="Whitehead S."/>
            <person name="Woodward J.R."/>
            <person name="Volckaert G."/>
            <person name="Aert R."/>
            <person name="Robben J."/>
            <person name="Grymonprez B."/>
            <person name="Weltjens I."/>
            <person name="Vanstreels E."/>
            <person name="Rieger M."/>
            <person name="Schaefer M."/>
            <person name="Mueller-Auer S."/>
            <person name="Gabel C."/>
            <person name="Fuchs M."/>
            <person name="Duesterhoeft A."/>
            <person name="Fritzc C."/>
            <person name="Holzer E."/>
            <person name="Moestl D."/>
            <person name="Hilbert H."/>
            <person name="Borzym K."/>
            <person name="Langer I."/>
            <person name="Beck A."/>
            <person name="Lehrach H."/>
            <person name="Reinhardt R."/>
            <person name="Pohl T.M."/>
            <person name="Eger P."/>
            <person name="Zimmermann W."/>
            <person name="Wedler H."/>
            <person name="Wambutt R."/>
            <person name="Purnelle B."/>
            <person name="Goffeau A."/>
            <person name="Cadieu E."/>
            <person name="Dreano S."/>
            <person name="Gloux S."/>
            <person name="Lelaure V."/>
            <person name="Mottier S."/>
            <person name="Galibert F."/>
            <person name="Aves S.J."/>
            <person name="Xiang Z."/>
            <person name="Hunt C."/>
            <person name="Moore K."/>
            <person name="Hurst S.M."/>
            <person name="Lucas M."/>
            <person name="Rochet M."/>
            <person name="Gaillardin C."/>
            <person name="Tallada V.A."/>
            <person name="Garzon A."/>
            <person name="Thode G."/>
            <person name="Daga R.R."/>
            <person name="Cruzado L."/>
            <person name="Jimenez J."/>
            <person name="Sanchez M."/>
            <person name="del Rey F."/>
            <person name="Benito J."/>
            <person name="Dominguez A."/>
            <person name="Revuelta J.L."/>
            <person name="Moreno S."/>
            <person name="Armstrong J."/>
            <person name="Forsburg S.L."/>
            <person name="Cerutti L."/>
            <person name="Lowe T."/>
            <person name="McCombie W.R."/>
            <person name="Paulsen I."/>
            <person name="Potashkin J."/>
            <person name="Shpakovski G.V."/>
            <person name="Ussery D."/>
            <person name="Barrell B.G."/>
            <person name="Nurse P."/>
        </authorList>
    </citation>
    <scope>NUCLEOTIDE SEQUENCE [LARGE SCALE GENOMIC DNA]</scope>
    <source>
        <strain>972 / ATCC 24843</strain>
    </source>
</reference>
<reference key="2">
    <citation type="journal article" date="1997" name="DNA Res.">
        <title>Identification of open reading frames in Schizosaccharomyces pombe cDNAs.</title>
        <authorList>
            <person name="Yoshioka S."/>
            <person name="Kato K."/>
            <person name="Nakai K."/>
            <person name="Okayama H."/>
            <person name="Nojima H."/>
        </authorList>
    </citation>
    <scope>NUCLEOTIDE SEQUENCE [LARGE SCALE MRNA] OF 179-507</scope>
    <source>
        <strain>PR745</strain>
    </source>
</reference>